<proteinExistence type="inferred from homology"/>
<comment type="function">
    <text evidence="1">Methyltransferase required for the conversion of demethylmenaquinol (DMKH2) to menaquinol (MKH2) and the conversion of 2-polyprenyl-6-methoxy-1,4-benzoquinol (DDMQH2) to 2-polyprenyl-3-methyl-6-methoxy-1,4-benzoquinol (DMQH2).</text>
</comment>
<comment type="catalytic activity">
    <reaction evidence="1">
        <text>a 2-demethylmenaquinol + S-adenosyl-L-methionine = a menaquinol + S-adenosyl-L-homocysteine + H(+)</text>
        <dbReference type="Rhea" id="RHEA:42640"/>
        <dbReference type="Rhea" id="RHEA-COMP:9539"/>
        <dbReference type="Rhea" id="RHEA-COMP:9563"/>
        <dbReference type="ChEBI" id="CHEBI:15378"/>
        <dbReference type="ChEBI" id="CHEBI:18151"/>
        <dbReference type="ChEBI" id="CHEBI:55437"/>
        <dbReference type="ChEBI" id="CHEBI:57856"/>
        <dbReference type="ChEBI" id="CHEBI:59789"/>
        <dbReference type="EC" id="2.1.1.163"/>
    </reaction>
</comment>
<comment type="catalytic activity">
    <reaction evidence="1">
        <text>a 2-methoxy-6-(all-trans-polyprenyl)benzene-1,4-diol + S-adenosyl-L-methionine = a 5-methoxy-2-methyl-3-(all-trans-polyprenyl)benzene-1,4-diol + S-adenosyl-L-homocysteine + H(+)</text>
        <dbReference type="Rhea" id="RHEA:28286"/>
        <dbReference type="Rhea" id="RHEA-COMP:10858"/>
        <dbReference type="Rhea" id="RHEA-COMP:10859"/>
        <dbReference type="ChEBI" id="CHEBI:15378"/>
        <dbReference type="ChEBI" id="CHEBI:57856"/>
        <dbReference type="ChEBI" id="CHEBI:59789"/>
        <dbReference type="ChEBI" id="CHEBI:84166"/>
        <dbReference type="ChEBI" id="CHEBI:84167"/>
        <dbReference type="EC" id="2.1.1.201"/>
    </reaction>
</comment>
<comment type="pathway">
    <text evidence="1">Quinol/quinone metabolism; menaquinone biosynthesis; menaquinol from 1,4-dihydroxy-2-naphthoate: step 2/2.</text>
</comment>
<comment type="pathway">
    <text evidence="1">Cofactor biosynthesis; ubiquinone biosynthesis.</text>
</comment>
<comment type="similarity">
    <text evidence="1">Belongs to the class I-like SAM-binding methyltransferase superfamily. MenG/UbiE family.</text>
</comment>
<accession>Q0SZ25</accession>
<sequence>MVDKSQETTHFGFQTVAKEQKADMVAHVFHSVASKYDVMNDLMSFGIHRLWKRFTIDCSGVRRGQTVLDLAGGTGDLTAKFSRLVGETGKVVLADINESMLKMGREKLRNIGVIGNVEYVQANAEALPFPDNTFDCITISFGLRNVTDKDKALRSMYRVLKPGGRLLVLEFSKPIIEPLSKAYDAYSFHVLPRIGSLVANDADSYRYLAESIRMHPDQDTLKAMMQDAGFESVDYYNLTAGVVALHRGYKF</sequence>
<name>UBIE_SHIF8</name>
<gene>
    <name evidence="1" type="primary">ubiE</name>
    <name type="ordered locus">SFV_3665</name>
</gene>
<protein>
    <recommendedName>
        <fullName evidence="1">Ubiquinone/menaquinone biosynthesis C-methyltransferase UbiE</fullName>
        <ecNumber evidence="1">2.1.1.163</ecNumber>
        <ecNumber evidence="1">2.1.1.201</ecNumber>
    </recommendedName>
    <alternativeName>
        <fullName evidence="1">2-methoxy-6-polyprenyl-1,4-benzoquinol methylase</fullName>
    </alternativeName>
    <alternativeName>
        <fullName evidence="1">Demethylmenaquinone methyltransferase</fullName>
    </alternativeName>
</protein>
<feature type="chain" id="PRO_1000056305" description="Ubiquinone/menaquinone biosynthesis C-methyltransferase UbiE">
    <location>
        <begin position="1"/>
        <end position="251"/>
    </location>
</feature>
<feature type="binding site" evidence="1">
    <location>
        <position position="74"/>
    </location>
    <ligand>
        <name>S-adenosyl-L-methionine</name>
        <dbReference type="ChEBI" id="CHEBI:59789"/>
    </ligand>
</feature>
<feature type="binding site" evidence="1">
    <location>
        <position position="95"/>
    </location>
    <ligand>
        <name>S-adenosyl-L-methionine</name>
        <dbReference type="ChEBI" id="CHEBI:59789"/>
    </ligand>
</feature>
<feature type="binding site" evidence="1">
    <location>
        <begin position="123"/>
        <end position="124"/>
    </location>
    <ligand>
        <name>S-adenosyl-L-methionine</name>
        <dbReference type="ChEBI" id="CHEBI:59789"/>
    </ligand>
</feature>
<feature type="binding site" evidence="1">
    <location>
        <position position="140"/>
    </location>
    <ligand>
        <name>S-adenosyl-L-methionine</name>
        <dbReference type="ChEBI" id="CHEBI:59789"/>
    </ligand>
</feature>
<keyword id="KW-0474">Menaquinone biosynthesis</keyword>
<keyword id="KW-0489">Methyltransferase</keyword>
<keyword id="KW-0949">S-adenosyl-L-methionine</keyword>
<keyword id="KW-0808">Transferase</keyword>
<keyword id="KW-0831">Ubiquinone biosynthesis</keyword>
<organism>
    <name type="scientific">Shigella flexneri serotype 5b (strain 8401)</name>
    <dbReference type="NCBI Taxonomy" id="373384"/>
    <lineage>
        <taxon>Bacteria</taxon>
        <taxon>Pseudomonadati</taxon>
        <taxon>Pseudomonadota</taxon>
        <taxon>Gammaproteobacteria</taxon>
        <taxon>Enterobacterales</taxon>
        <taxon>Enterobacteriaceae</taxon>
        <taxon>Shigella</taxon>
    </lineage>
</organism>
<dbReference type="EC" id="2.1.1.163" evidence="1"/>
<dbReference type="EC" id="2.1.1.201" evidence="1"/>
<dbReference type="EMBL" id="CP000266">
    <property type="protein sequence ID" value="ABF05690.1"/>
    <property type="molecule type" value="Genomic_DNA"/>
</dbReference>
<dbReference type="RefSeq" id="WP_000227958.1">
    <property type="nucleotide sequence ID" value="NC_008258.1"/>
</dbReference>
<dbReference type="SMR" id="Q0SZ25"/>
<dbReference type="GeneID" id="93778102"/>
<dbReference type="KEGG" id="sfv:SFV_3665"/>
<dbReference type="HOGENOM" id="CLU_037990_0_0_6"/>
<dbReference type="UniPathway" id="UPA00079">
    <property type="reaction ID" value="UER00169"/>
</dbReference>
<dbReference type="UniPathway" id="UPA00232"/>
<dbReference type="Proteomes" id="UP000000659">
    <property type="component" value="Chromosome"/>
</dbReference>
<dbReference type="GO" id="GO:0008425">
    <property type="term" value="F:2-methoxy-6-polyprenyl-1,4-benzoquinol methyltransferase activity"/>
    <property type="evidence" value="ECO:0007669"/>
    <property type="project" value="UniProtKB-UniRule"/>
</dbReference>
<dbReference type="GO" id="GO:0043770">
    <property type="term" value="F:demethylmenaquinone methyltransferase activity"/>
    <property type="evidence" value="ECO:0007669"/>
    <property type="project" value="UniProtKB-UniRule"/>
</dbReference>
<dbReference type="GO" id="GO:0009060">
    <property type="term" value="P:aerobic respiration"/>
    <property type="evidence" value="ECO:0007669"/>
    <property type="project" value="UniProtKB-UniRule"/>
</dbReference>
<dbReference type="GO" id="GO:0009234">
    <property type="term" value="P:menaquinone biosynthetic process"/>
    <property type="evidence" value="ECO:0007669"/>
    <property type="project" value="UniProtKB-UniRule"/>
</dbReference>
<dbReference type="GO" id="GO:0032259">
    <property type="term" value="P:methylation"/>
    <property type="evidence" value="ECO:0007669"/>
    <property type="project" value="UniProtKB-KW"/>
</dbReference>
<dbReference type="CDD" id="cd02440">
    <property type="entry name" value="AdoMet_MTases"/>
    <property type="match status" value="1"/>
</dbReference>
<dbReference type="FunFam" id="3.40.50.150:FF:000014">
    <property type="entry name" value="Ubiquinone/menaquinone biosynthesis C-methyltransferase UbiE"/>
    <property type="match status" value="1"/>
</dbReference>
<dbReference type="Gene3D" id="3.40.50.150">
    <property type="entry name" value="Vaccinia Virus protein VP39"/>
    <property type="match status" value="1"/>
</dbReference>
<dbReference type="HAMAP" id="MF_01813">
    <property type="entry name" value="MenG_UbiE_methyltr"/>
    <property type="match status" value="1"/>
</dbReference>
<dbReference type="InterPro" id="IPR029063">
    <property type="entry name" value="SAM-dependent_MTases_sf"/>
</dbReference>
<dbReference type="InterPro" id="IPR004033">
    <property type="entry name" value="UbiE/COQ5_MeTrFase"/>
</dbReference>
<dbReference type="InterPro" id="IPR023576">
    <property type="entry name" value="UbiE/COQ5_MeTrFase_CS"/>
</dbReference>
<dbReference type="NCBIfam" id="TIGR01934">
    <property type="entry name" value="MenG_MenH_UbiE"/>
    <property type="match status" value="1"/>
</dbReference>
<dbReference type="NCBIfam" id="NF001240">
    <property type="entry name" value="PRK00216.1-1"/>
    <property type="match status" value="1"/>
</dbReference>
<dbReference type="NCBIfam" id="NF001242">
    <property type="entry name" value="PRK00216.1-3"/>
    <property type="match status" value="1"/>
</dbReference>
<dbReference type="NCBIfam" id="NF001244">
    <property type="entry name" value="PRK00216.1-5"/>
    <property type="match status" value="1"/>
</dbReference>
<dbReference type="PANTHER" id="PTHR43591:SF24">
    <property type="entry name" value="2-METHOXY-6-POLYPRENYL-1,4-BENZOQUINOL METHYLASE, MITOCHONDRIAL"/>
    <property type="match status" value="1"/>
</dbReference>
<dbReference type="PANTHER" id="PTHR43591">
    <property type="entry name" value="METHYLTRANSFERASE"/>
    <property type="match status" value="1"/>
</dbReference>
<dbReference type="Pfam" id="PF01209">
    <property type="entry name" value="Ubie_methyltran"/>
    <property type="match status" value="1"/>
</dbReference>
<dbReference type="SUPFAM" id="SSF53335">
    <property type="entry name" value="S-adenosyl-L-methionine-dependent methyltransferases"/>
    <property type="match status" value="1"/>
</dbReference>
<dbReference type="PROSITE" id="PS51608">
    <property type="entry name" value="SAM_MT_UBIE"/>
    <property type="match status" value="1"/>
</dbReference>
<dbReference type="PROSITE" id="PS01183">
    <property type="entry name" value="UBIE_1"/>
    <property type="match status" value="1"/>
</dbReference>
<dbReference type="PROSITE" id="PS01184">
    <property type="entry name" value="UBIE_2"/>
    <property type="match status" value="1"/>
</dbReference>
<evidence type="ECO:0000255" key="1">
    <source>
        <dbReference type="HAMAP-Rule" id="MF_01813"/>
    </source>
</evidence>
<reference key="1">
    <citation type="journal article" date="2006" name="BMC Genomics">
        <title>Complete genome sequence of Shigella flexneri 5b and comparison with Shigella flexneri 2a.</title>
        <authorList>
            <person name="Nie H."/>
            <person name="Yang F."/>
            <person name="Zhang X."/>
            <person name="Yang J."/>
            <person name="Chen L."/>
            <person name="Wang J."/>
            <person name="Xiong Z."/>
            <person name="Peng J."/>
            <person name="Sun L."/>
            <person name="Dong J."/>
            <person name="Xue Y."/>
            <person name="Xu X."/>
            <person name="Chen S."/>
            <person name="Yao Z."/>
            <person name="Shen Y."/>
            <person name="Jin Q."/>
        </authorList>
    </citation>
    <scope>NUCLEOTIDE SEQUENCE [LARGE SCALE GENOMIC DNA]</scope>
    <source>
        <strain>8401</strain>
    </source>
</reference>